<proteinExistence type="evidence at protein level"/>
<accession>Q8NSH7</accession>
<dbReference type="EC" id="2.3.3.5" evidence="4"/>
<dbReference type="EC" id="2.3.3.16" evidence="4"/>
<dbReference type="EMBL" id="AF434798">
    <property type="protein sequence ID" value="AAM21502.1"/>
    <property type="molecule type" value="Genomic_DNA"/>
</dbReference>
<dbReference type="EMBL" id="BA000036">
    <property type="protein sequence ID" value="BAB98089.1"/>
    <property type="status" value="ALT_INIT"/>
    <property type="molecule type" value="Genomic_DNA"/>
</dbReference>
<dbReference type="EMBL" id="BX927150">
    <property type="protein sequence ID" value="CAF19401.1"/>
    <property type="molecule type" value="Genomic_DNA"/>
</dbReference>
<dbReference type="RefSeq" id="NP_599928.1">
    <property type="nucleotide sequence ID" value="NC_003450.3"/>
</dbReference>
<dbReference type="RefSeq" id="WP_011013823.1">
    <property type="nucleotide sequence ID" value="NC_006958.1"/>
</dbReference>
<dbReference type="SMR" id="Q8NSH7"/>
<dbReference type="STRING" id="196627.cg0798"/>
<dbReference type="KEGG" id="cgb:cg0798"/>
<dbReference type="KEGG" id="cgl:Cgl0696"/>
<dbReference type="PATRIC" id="fig|196627.13.peg.682"/>
<dbReference type="eggNOG" id="COG0372">
    <property type="taxonomic scope" value="Bacteria"/>
</dbReference>
<dbReference type="HOGENOM" id="CLU_025068_2_1_11"/>
<dbReference type="OrthoDB" id="9800864at2"/>
<dbReference type="BioCyc" id="CORYNE:G18NG-10258-MONOMER"/>
<dbReference type="BRENDA" id="2.3.3.5">
    <property type="organism ID" value="960"/>
</dbReference>
<dbReference type="UniPathway" id="UPA00223"/>
<dbReference type="Proteomes" id="UP000000582">
    <property type="component" value="Chromosome"/>
</dbReference>
<dbReference type="Proteomes" id="UP000001009">
    <property type="component" value="Chromosome"/>
</dbReference>
<dbReference type="GO" id="GO:0005829">
    <property type="term" value="C:cytosol"/>
    <property type="evidence" value="ECO:0007669"/>
    <property type="project" value="TreeGrafter"/>
</dbReference>
<dbReference type="GO" id="GO:0050440">
    <property type="term" value="F:2-methylcitrate synthase activity"/>
    <property type="evidence" value="ECO:0000314"/>
    <property type="project" value="UniProtKB"/>
</dbReference>
<dbReference type="GO" id="GO:0004108">
    <property type="term" value="F:citrate (Si)-synthase activity"/>
    <property type="evidence" value="ECO:0007669"/>
    <property type="project" value="TreeGrafter"/>
</dbReference>
<dbReference type="GO" id="GO:0036440">
    <property type="term" value="F:citrate synthase activity"/>
    <property type="evidence" value="ECO:0000314"/>
    <property type="project" value="UniProtKB"/>
</dbReference>
<dbReference type="GO" id="GO:0005975">
    <property type="term" value="P:carbohydrate metabolic process"/>
    <property type="evidence" value="ECO:0007669"/>
    <property type="project" value="TreeGrafter"/>
</dbReference>
<dbReference type="GO" id="GO:0006099">
    <property type="term" value="P:tricarboxylic acid cycle"/>
    <property type="evidence" value="ECO:0007669"/>
    <property type="project" value="UniProtKB-UniPathway"/>
</dbReference>
<dbReference type="CDD" id="cd06111">
    <property type="entry name" value="DsCS_like"/>
    <property type="match status" value="1"/>
</dbReference>
<dbReference type="Gene3D" id="1.10.580.10">
    <property type="entry name" value="Citrate Synthase, domain 1"/>
    <property type="match status" value="1"/>
</dbReference>
<dbReference type="Gene3D" id="1.10.230.10">
    <property type="entry name" value="Cytochrome P450-Terp, domain 2"/>
    <property type="match status" value="1"/>
</dbReference>
<dbReference type="InterPro" id="IPR011278">
    <property type="entry name" value="2-MeCitrate/Citrate_synth_II"/>
</dbReference>
<dbReference type="InterPro" id="IPR016142">
    <property type="entry name" value="Citrate_synth-like_lrg_a-sub"/>
</dbReference>
<dbReference type="InterPro" id="IPR016143">
    <property type="entry name" value="Citrate_synth-like_sm_a-sub"/>
</dbReference>
<dbReference type="InterPro" id="IPR002020">
    <property type="entry name" value="Citrate_synthase"/>
</dbReference>
<dbReference type="InterPro" id="IPR019810">
    <property type="entry name" value="Citrate_synthase_AS"/>
</dbReference>
<dbReference type="InterPro" id="IPR024176">
    <property type="entry name" value="Citrate_synthase_bac-typ"/>
</dbReference>
<dbReference type="InterPro" id="IPR036969">
    <property type="entry name" value="Citrate_synthase_sf"/>
</dbReference>
<dbReference type="NCBIfam" id="TIGR01800">
    <property type="entry name" value="cit_synth_II"/>
    <property type="match status" value="1"/>
</dbReference>
<dbReference type="NCBIfam" id="NF010636">
    <property type="entry name" value="PRK14033.1"/>
    <property type="match status" value="1"/>
</dbReference>
<dbReference type="PANTHER" id="PTHR11739">
    <property type="entry name" value="CITRATE SYNTHASE"/>
    <property type="match status" value="1"/>
</dbReference>
<dbReference type="PANTHER" id="PTHR11739:SF4">
    <property type="entry name" value="CITRATE SYNTHASE, PEROXISOMAL"/>
    <property type="match status" value="1"/>
</dbReference>
<dbReference type="Pfam" id="PF00285">
    <property type="entry name" value="Citrate_synt"/>
    <property type="match status" value="1"/>
</dbReference>
<dbReference type="PIRSF" id="PIRSF001369">
    <property type="entry name" value="Citrate_synth"/>
    <property type="match status" value="1"/>
</dbReference>
<dbReference type="PRINTS" id="PR00143">
    <property type="entry name" value="CITRTSNTHASE"/>
</dbReference>
<dbReference type="SUPFAM" id="SSF48256">
    <property type="entry name" value="Citrate synthase"/>
    <property type="match status" value="1"/>
</dbReference>
<dbReference type="PROSITE" id="PS00480">
    <property type="entry name" value="CITRATE_SYNTHASE"/>
    <property type="match status" value="1"/>
</dbReference>
<evidence type="ECO:0000250" key="1">
    <source>
        <dbReference type="UniProtKB" id="I6Y9Q3"/>
    </source>
</evidence>
<evidence type="ECO:0000250" key="2">
    <source>
        <dbReference type="UniProtKB" id="O34002"/>
    </source>
</evidence>
<evidence type="ECO:0000250" key="3">
    <source>
        <dbReference type="UniProtKB" id="P31660"/>
    </source>
</evidence>
<evidence type="ECO:0000269" key="4">
    <source>
    </source>
</evidence>
<evidence type="ECO:0000303" key="5">
    <source>
    </source>
</evidence>
<evidence type="ECO:0000305" key="6"/>
<evidence type="ECO:0000305" key="7">
    <source>
    </source>
</evidence>
<sequence length="381" mass="42567">MSDSQVRKGLNGVISDYTSISKVMPESNSLTYRGYAVEDLVENCSFEEVIYLLWFGELPTTEQLRTFNTTGRSYRSLDAGLISLIHSLPNTCHPMDVLRTAVSYMGTFDPDPFTRDADHIRSIGHNLLAQLPMVVAMDIRRRSGEEIIAPDHNKGIASNFLSMVFGNDDGSVANSADDIRDFERSLILYAEHSFNASTFSARVISSTRSDTYSAITGAIGALKGPLHGGANEFVMHTMLDIDDPNNAADWMGKALDRKERIMGFGHRVYKNGDSRVPSMEKSMRSLAARHRGQKWVHMYESMQEVMEARTGIKPNLDFPAGPAYYMLGFPVDFFTPLFVLARVSGWTAHIVEQFENNALIRPLSAYNGVEEREVVPISERT</sequence>
<feature type="chain" id="PRO_0000169979" description="2-methylcitrate synthase 1">
    <location>
        <begin position="1"/>
        <end position="381"/>
    </location>
</feature>
<feature type="active site" evidence="2">
    <location>
        <position position="227"/>
    </location>
</feature>
<feature type="active site" evidence="2">
    <location>
        <position position="266"/>
    </location>
</feature>
<feature type="active site" evidence="2">
    <location>
        <position position="317"/>
    </location>
</feature>
<feature type="binding site" evidence="1">
    <location>
        <position position="192"/>
    </location>
    <ligand>
        <name>substrate</name>
    </ligand>
</feature>
<feature type="binding site" evidence="2">
    <location>
        <begin position="260"/>
        <end position="264"/>
    </location>
    <ligand>
        <name>CoA</name>
        <dbReference type="ChEBI" id="CHEBI:57287"/>
    </ligand>
</feature>
<feature type="binding site" evidence="1">
    <location>
        <position position="275"/>
    </location>
    <ligand>
        <name>substrate</name>
    </ligand>
</feature>
<feature type="binding site" evidence="1">
    <location>
        <position position="342"/>
    </location>
    <ligand>
        <name>substrate</name>
    </ligand>
</feature>
<feature type="binding site" evidence="1">
    <location>
        <position position="361"/>
    </location>
    <ligand>
        <name>substrate</name>
    </ligand>
</feature>
<organism>
    <name type="scientific">Corynebacterium glutamicum (strain ATCC 13032 / DSM 20300 / JCM 1318 / BCRC 11384 / CCUG 27702 / LMG 3730 / NBRC 12168 / NCIMB 10025 / NRRL B-2784 / 534)</name>
    <dbReference type="NCBI Taxonomy" id="196627"/>
    <lineage>
        <taxon>Bacteria</taxon>
        <taxon>Bacillati</taxon>
        <taxon>Actinomycetota</taxon>
        <taxon>Actinomycetes</taxon>
        <taxon>Mycobacteriales</taxon>
        <taxon>Corynebacteriaceae</taxon>
        <taxon>Corynebacterium</taxon>
    </lineage>
</organism>
<protein>
    <recommendedName>
        <fullName evidence="5">2-methylcitrate synthase 1</fullName>
        <shortName evidence="5">2-MCS</shortName>
        <shortName evidence="5">MCS</shortName>
        <ecNumber evidence="4">2.3.3.5</ecNumber>
    </recommendedName>
    <alternativeName>
        <fullName evidence="5">Citrate synthase 1</fullName>
        <shortName evidence="5">CS</shortName>
        <ecNumber evidence="4">2.3.3.16</ecNumber>
    </alternativeName>
</protein>
<comment type="function">
    <text evidence="4">Catalyzes the Claisen condensation of propionyl-CoA and oxaloacetate (OAA) to yield 2-methylcitrate (2-MC) and CoA. Also catalyzes the condensation of oxaloacetate with propionyl-CoA but with a lower specificity.</text>
</comment>
<comment type="catalytic activity">
    <reaction evidence="4">
        <text>propanoyl-CoA + oxaloacetate + H2O = (2S,3S)-2-methylcitrate + CoA + H(+)</text>
        <dbReference type="Rhea" id="RHEA:23780"/>
        <dbReference type="ChEBI" id="CHEBI:15377"/>
        <dbReference type="ChEBI" id="CHEBI:15378"/>
        <dbReference type="ChEBI" id="CHEBI:16452"/>
        <dbReference type="ChEBI" id="CHEBI:57287"/>
        <dbReference type="ChEBI" id="CHEBI:57392"/>
        <dbReference type="ChEBI" id="CHEBI:58853"/>
        <dbReference type="EC" id="2.3.3.5"/>
    </reaction>
</comment>
<comment type="catalytic activity">
    <reaction evidence="4">
        <text>oxaloacetate + acetyl-CoA + H2O = citrate + CoA + H(+)</text>
        <dbReference type="Rhea" id="RHEA:16845"/>
        <dbReference type="ChEBI" id="CHEBI:15377"/>
        <dbReference type="ChEBI" id="CHEBI:15378"/>
        <dbReference type="ChEBI" id="CHEBI:16452"/>
        <dbReference type="ChEBI" id="CHEBI:16947"/>
        <dbReference type="ChEBI" id="CHEBI:57287"/>
        <dbReference type="ChEBI" id="CHEBI:57288"/>
        <dbReference type="EC" id="2.3.3.16"/>
    </reaction>
</comment>
<comment type="pathway">
    <text evidence="7">Carbohydrate metabolism; tricarboxylic acid cycle.</text>
</comment>
<comment type="subunit">
    <text evidence="3">Homodimer.</text>
</comment>
<comment type="induction">
    <text evidence="4">By propionate.</text>
</comment>
<comment type="miscellaneous">
    <text evidence="4">The prpD1B1C1 operon seems not to be involved in propionate degradation.</text>
</comment>
<comment type="similarity">
    <text evidence="6">Belongs to the citrate synthase family.</text>
</comment>
<comment type="sequence caution" evidence="6">
    <conflict type="erroneous initiation">
        <sequence resource="EMBL-CDS" id="BAB98089"/>
    </conflict>
    <text>Extended N-terminus.</text>
</comment>
<gene>
    <name type="primary">prpC1</name>
    <name type="ordered locus">Cgl0696</name>
    <name type="ordered locus">cg0798</name>
</gene>
<keyword id="KW-1185">Reference proteome</keyword>
<keyword id="KW-0808">Transferase</keyword>
<keyword id="KW-0816">Tricarboxylic acid cycle</keyword>
<reference key="1">
    <citation type="journal article" date="2002" name="J. Bacteriol.">
        <title>Identification of two prpDBC gene clusters in Corynebacterium glutamicum and their involvement in propionate degradation via the 2-methylcitrate cycle.</title>
        <authorList>
            <person name="Claes W.A."/>
            <person name="Puehler A."/>
            <person name="Kalinowski J."/>
        </authorList>
    </citation>
    <scope>NUCLEOTIDE SEQUENCE [GENOMIC DNA]</scope>
    <scope>FUNCTION</scope>
    <scope>CATALYTIC ACTIVITY</scope>
    <scope>SUBSTRATE SPECIFICITY</scope>
    <scope>INDUCTION</scope>
    <source>
        <strain>ATCC 13032 / DSM 20300 / JCM 1318 / BCRC 11384 / CCUG 27702 / LMG 3730 / NBRC 12168 / NCIMB 10025 / NRRL B-2784 / 534</strain>
    </source>
</reference>
<reference key="2">
    <citation type="journal article" date="2003" name="Appl. Microbiol. Biotechnol.">
        <title>The Corynebacterium glutamicum genome: features and impacts on biotechnological processes.</title>
        <authorList>
            <person name="Ikeda M."/>
            <person name="Nakagawa S."/>
        </authorList>
    </citation>
    <scope>NUCLEOTIDE SEQUENCE [LARGE SCALE GENOMIC DNA]</scope>
    <source>
        <strain>ATCC 13032 / DSM 20300 / JCM 1318 / BCRC 11384 / CCUG 27702 / LMG 3730 / NBRC 12168 / NCIMB 10025 / NRRL B-2784 / 534</strain>
    </source>
</reference>
<reference key="3">
    <citation type="journal article" date="2003" name="J. Biotechnol.">
        <title>The complete Corynebacterium glutamicum ATCC 13032 genome sequence and its impact on the production of L-aspartate-derived amino acids and vitamins.</title>
        <authorList>
            <person name="Kalinowski J."/>
            <person name="Bathe B."/>
            <person name="Bartels D."/>
            <person name="Bischoff N."/>
            <person name="Bott M."/>
            <person name="Burkovski A."/>
            <person name="Dusch N."/>
            <person name="Eggeling L."/>
            <person name="Eikmanns B.J."/>
            <person name="Gaigalat L."/>
            <person name="Goesmann A."/>
            <person name="Hartmann M."/>
            <person name="Huthmacher K."/>
            <person name="Kraemer R."/>
            <person name="Linke B."/>
            <person name="McHardy A.C."/>
            <person name="Meyer F."/>
            <person name="Moeckel B."/>
            <person name="Pfefferle W."/>
            <person name="Puehler A."/>
            <person name="Rey D.A."/>
            <person name="Rueckert C."/>
            <person name="Rupp O."/>
            <person name="Sahm H."/>
            <person name="Wendisch V.F."/>
            <person name="Wiegraebe I."/>
            <person name="Tauch A."/>
        </authorList>
    </citation>
    <scope>NUCLEOTIDE SEQUENCE [LARGE SCALE GENOMIC DNA]</scope>
    <source>
        <strain>ATCC 13032 / DSM 20300 / JCM 1318 / BCRC 11384 / CCUG 27702 / LMG 3730 / NBRC 12168 / NCIMB 10025 / NRRL B-2784 / 534</strain>
    </source>
</reference>
<name>PRPC1_CORGL</name>